<accession>Q8JFQ2</accession>
<proteinExistence type="evidence at transcript level"/>
<feature type="chain" id="PRO_0000318109" description="Rhombotin-1">
    <location>
        <begin position="1"/>
        <end position="155"/>
    </location>
</feature>
<feature type="domain" description="LIM zinc-binding 1" evidence="2">
    <location>
        <begin position="21"/>
        <end position="83"/>
    </location>
</feature>
<feature type="domain" description="LIM zinc-binding 2" evidence="2">
    <location>
        <begin position="85"/>
        <end position="147"/>
    </location>
</feature>
<protein>
    <recommendedName>
        <fullName>Rhombotin-1</fullName>
    </recommendedName>
    <alternativeName>
        <fullName>LIM domain only protein 1</fullName>
        <shortName>LMO-1</shortName>
    </alternativeName>
</protein>
<name>RBTN1_DANRE</name>
<gene>
    <name evidence="5" type="primary">lmo1</name>
</gene>
<sequence>MVLDKEEGVPMLSVQPKGKQKGCAGCNRKIKDRYLLKALDKYWHEDCLKCACCDCRLGEVGSTLYTKANLILCRRDYLRLFGTTGNCAACSKLIPAFEMVMRARDNVYHLDCFACQLCNQRFCVGDKFFLKNNMILCQMDYEEGQLNGSFETQVQ</sequence>
<comment type="function">
    <text evidence="1">May be involved in gene regulation within neural lineage cells potentially by direct DNA binding or by binding to other transcription factors.</text>
</comment>
<comment type="subcellular location">
    <subcellularLocation>
        <location evidence="1">Nucleus</location>
    </subcellularLocation>
</comment>
<evidence type="ECO:0000250" key="1">
    <source>
        <dbReference type="UniProtKB" id="Q924W9"/>
    </source>
</evidence>
<evidence type="ECO:0000255" key="2">
    <source>
        <dbReference type="PROSITE-ProRule" id="PRU00125"/>
    </source>
</evidence>
<evidence type="ECO:0000312" key="3">
    <source>
        <dbReference type="EMBL" id="AAH92690.1"/>
    </source>
</evidence>
<evidence type="ECO:0000312" key="4">
    <source>
        <dbReference type="EMBL" id="AAN03595.1"/>
    </source>
</evidence>
<evidence type="ECO:0000312" key="5">
    <source>
        <dbReference type="ZFIN" id="ZDB-GENE-021115-6"/>
    </source>
</evidence>
<dbReference type="EMBL" id="AF398514">
    <property type="protein sequence ID" value="AAN03595.1"/>
    <property type="molecule type" value="mRNA"/>
</dbReference>
<dbReference type="EMBL" id="BC092690">
    <property type="protein sequence ID" value="AAH92690.1"/>
    <property type="molecule type" value="mRNA"/>
</dbReference>
<dbReference type="RefSeq" id="NP_775326.1">
    <property type="nucleotide sequence ID" value="NM_173219.3"/>
</dbReference>
<dbReference type="SMR" id="Q8JFQ2"/>
<dbReference type="FunCoup" id="Q8JFQ2">
    <property type="interactions" value="1515"/>
</dbReference>
<dbReference type="STRING" id="7955.ENSDARP00000135314"/>
<dbReference type="PaxDb" id="7955-ENSDARP00000044207"/>
<dbReference type="Ensembl" id="ENSDART00000044208">
    <property type="protein sequence ID" value="ENSDARP00000044207"/>
    <property type="gene ID" value="ENSDARG00000034504"/>
</dbReference>
<dbReference type="GeneID" id="280646"/>
<dbReference type="KEGG" id="dre:280646"/>
<dbReference type="AGR" id="ZFIN:ZDB-GENE-021115-6"/>
<dbReference type="CTD" id="4004"/>
<dbReference type="ZFIN" id="ZDB-GENE-021115-6">
    <property type="gene designation" value="lmo1"/>
</dbReference>
<dbReference type="eggNOG" id="KOG0490">
    <property type="taxonomic scope" value="Eukaryota"/>
</dbReference>
<dbReference type="HOGENOM" id="CLU_001357_7_1_1"/>
<dbReference type="InParanoid" id="Q8JFQ2"/>
<dbReference type="OrthoDB" id="6352355at2759"/>
<dbReference type="PhylomeDB" id="Q8JFQ2"/>
<dbReference type="TreeFam" id="TF351071"/>
<dbReference type="PRO" id="PR:Q8JFQ2"/>
<dbReference type="Proteomes" id="UP000000437">
    <property type="component" value="Chromosome 7"/>
</dbReference>
<dbReference type="Bgee" id="ENSDARG00000034504">
    <property type="expression patterns" value="Expressed in brain and 34 other cell types or tissues"/>
</dbReference>
<dbReference type="ExpressionAtlas" id="Q8JFQ2">
    <property type="expression patterns" value="baseline"/>
</dbReference>
<dbReference type="GO" id="GO:0005634">
    <property type="term" value="C:nucleus"/>
    <property type="evidence" value="ECO:0000250"/>
    <property type="project" value="UniProtKB"/>
</dbReference>
<dbReference type="GO" id="GO:0140297">
    <property type="term" value="F:DNA-binding transcription factor binding"/>
    <property type="evidence" value="ECO:0000318"/>
    <property type="project" value="GO_Central"/>
</dbReference>
<dbReference type="GO" id="GO:0046872">
    <property type="term" value="F:metal ion binding"/>
    <property type="evidence" value="ECO:0007669"/>
    <property type="project" value="UniProtKB-KW"/>
</dbReference>
<dbReference type="GO" id="GO:0003713">
    <property type="term" value="F:transcription coactivator activity"/>
    <property type="evidence" value="ECO:0000318"/>
    <property type="project" value="GO_Central"/>
</dbReference>
<dbReference type="GO" id="GO:0045944">
    <property type="term" value="P:positive regulation of transcription by RNA polymerase II"/>
    <property type="evidence" value="ECO:0000318"/>
    <property type="project" value="GO_Central"/>
</dbReference>
<dbReference type="CDD" id="cd09388">
    <property type="entry name" value="LIM1_LMO1_LMO3"/>
    <property type="match status" value="1"/>
</dbReference>
<dbReference type="CDD" id="cd09389">
    <property type="entry name" value="LIM2_LMO1_LMO3"/>
    <property type="match status" value="1"/>
</dbReference>
<dbReference type="FunFam" id="2.10.110.10:FF:000015">
    <property type="entry name" value="LIM domain only 3"/>
    <property type="match status" value="1"/>
</dbReference>
<dbReference type="FunFam" id="2.10.110.10:FF:000016">
    <property type="entry name" value="LIM domain only 3"/>
    <property type="match status" value="1"/>
</dbReference>
<dbReference type="Gene3D" id="2.10.110.10">
    <property type="entry name" value="Cysteine Rich Protein"/>
    <property type="match status" value="2"/>
</dbReference>
<dbReference type="InterPro" id="IPR050945">
    <property type="entry name" value="LMO_RBTN_TF"/>
</dbReference>
<dbReference type="InterPro" id="IPR001781">
    <property type="entry name" value="Znf_LIM"/>
</dbReference>
<dbReference type="PANTHER" id="PTHR45787">
    <property type="entry name" value="LD11652P"/>
    <property type="match status" value="1"/>
</dbReference>
<dbReference type="PANTHER" id="PTHR45787:SF2">
    <property type="entry name" value="RHOMBOTIN-1"/>
    <property type="match status" value="1"/>
</dbReference>
<dbReference type="Pfam" id="PF00412">
    <property type="entry name" value="LIM"/>
    <property type="match status" value="2"/>
</dbReference>
<dbReference type="SMART" id="SM00132">
    <property type="entry name" value="LIM"/>
    <property type="match status" value="2"/>
</dbReference>
<dbReference type="SUPFAM" id="SSF57716">
    <property type="entry name" value="Glucocorticoid receptor-like (DNA-binding domain)"/>
    <property type="match status" value="3"/>
</dbReference>
<dbReference type="PROSITE" id="PS00478">
    <property type="entry name" value="LIM_DOMAIN_1"/>
    <property type="match status" value="2"/>
</dbReference>
<dbReference type="PROSITE" id="PS50023">
    <property type="entry name" value="LIM_DOMAIN_2"/>
    <property type="match status" value="2"/>
</dbReference>
<keyword id="KW-0440">LIM domain</keyword>
<keyword id="KW-0479">Metal-binding</keyword>
<keyword id="KW-0539">Nucleus</keyword>
<keyword id="KW-1185">Reference proteome</keyword>
<keyword id="KW-0677">Repeat</keyword>
<keyword id="KW-0862">Zinc</keyword>
<reference evidence="4" key="1">
    <citation type="journal article" date="2005" name="Proc. Natl. Acad. Sci. U.S.A.">
        <title>Cre/lox-regulated transgenic zebrafish model with conditional myc-induced T cell acute lymphoblastic leukemia.</title>
        <authorList>
            <person name="Langenau D.M."/>
            <person name="Feng H."/>
            <person name="Berghmans S."/>
            <person name="Kanki J.P."/>
            <person name="Kutok J.L."/>
            <person name="Look A.T."/>
        </authorList>
    </citation>
    <scope>NUCLEOTIDE SEQUENCE [MRNA]</scope>
    <source>
        <tissue evidence="4">Embryo</tissue>
    </source>
</reference>
<reference evidence="3" key="2">
    <citation type="submission" date="2005-04" db="EMBL/GenBank/DDBJ databases">
        <authorList>
            <consortium name="NIH - Zebrafish Gene Collection (ZGC) project"/>
        </authorList>
    </citation>
    <scope>NUCLEOTIDE SEQUENCE [LARGE SCALE MRNA]</scope>
    <source>
        <tissue evidence="3">Brain</tissue>
    </source>
</reference>
<organism>
    <name type="scientific">Danio rerio</name>
    <name type="common">Zebrafish</name>
    <name type="synonym">Brachydanio rerio</name>
    <dbReference type="NCBI Taxonomy" id="7955"/>
    <lineage>
        <taxon>Eukaryota</taxon>
        <taxon>Metazoa</taxon>
        <taxon>Chordata</taxon>
        <taxon>Craniata</taxon>
        <taxon>Vertebrata</taxon>
        <taxon>Euteleostomi</taxon>
        <taxon>Actinopterygii</taxon>
        <taxon>Neopterygii</taxon>
        <taxon>Teleostei</taxon>
        <taxon>Ostariophysi</taxon>
        <taxon>Cypriniformes</taxon>
        <taxon>Danionidae</taxon>
        <taxon>Danioninae</taxon>
        <taxon>Danio</taxon>
    </lineage>
</organism>